<organism>
    <name type="scientific">Bos taurus</name>
    <name type="common">Bovine</name>
    <dbReference type="NCBI Taxonomy" id="9913"/>
    <lineage>
        <taxon>Eukaryota</taxon>
        <taxon>Metazoa</taxon>
        <taxon>Chordata</taxon>
        <taxon>Craniata</taxon>
        <taxon>Vertebrata</taxon>
        <taxon>Euteleostomi</taxon>
        <taxon>Mammalia</taxon>
        <taxon>Eutheria</taxon>
        <taxon>Laurasiatheria</taxon>
        <taxon>Artiodactyla</taxon>
        <taxon>Ruminantia</taxon>
        <taxon>Pecora</taxon>
        <taxon>Bovidae</taxon>
        <taxon>Bovinae</taxon>
        <taxon>Bos</taxon>
    </lineage>
</organism>
<sequence>MAAPRSWALWSFCGCGWSRAVSGCRLPGLRSSSPRGPLGARLLSQEKEATETHFGFETVSEEEKGGKVYQVFESVAKKYDVMNDMMSLGIHRVWKDLLLWKMRPFPGTQLLDVAGGTGDIAFRFLNYVQAQHQRKQKRQLRAQQNLSWEEIARKYQNEEDSLGGSHVMVCDINKEMLKIGKQKARAQGYKAGLAWILGDAEELPFDDNKFDVYTIAFGIRNVTHIDQALQEAHRVLKPGGRFLCLEFSQVNNPLLSRLYDVYSFQVIPVLGEVIAGDWKSYQYLVESIRQFPSQEEFKEMIEDAGFQKVTYENLTSGIVAIHSGFKLYLR</sequence>
<comment type="function">
    <text evidence="1">Methyltransferase required for the conversion of 2-decaprenyl-6-methoxy-1,4-benzoquinol (DDMQH2) to 2-decaprenyl-3-methyl-6-methoxy-1,4-benzoquinol (DMQH2).</text>
</comment>
<comment type="catalytic activity">
    <reaction evidence="2">
        <text>2-methoxy-6-(all-trans-decaprenyl)benzene-1,4-diol + S-adenosyl-L-methionine = 5-methoxy-2-methyl-3-(all-trans-decaprenyl)benzene-1,4-diol + S-adenosyl-L-homocysteine + H(+)</text>
        <dbReference type="Rhea" id="RHEA:44764"/>
        <dbReference type="ChEBI" id="CHEBI:15378"/>
        <dbReference type="ChEBI" id="CHEBI:57856"/>
        <dbReference type="ChEBI" id="CHEBI:59789"/>
        <dbReference type="ChEBI" id="CHEBI:64180"/>
        <dbReference type="ChEBI" id="CHEBI:64181"/>
        <dbReference type="EC" id="2.1.1.201"/>
    </reaction>
</comment>
<comment type="pathway">
    <text evidence="2">Cofactor biosynthesis; ubiquinone biosynthesis.</text>
</comment>
<comment type="subunit">
    <text evidence="1 2">Component of a multi-subunit COQ enzyme complex, composed of at least COQ3, COQ4, COQ5, COQ6, COQ7 and COQ9. Interacts with PYURF; the interaction is direct, stabilizes COQ5 protein and associates PYURF with COQ enzyme complex (By similarity).</text>
</comment>
<comment type="subcellular location">
    <subcellularLocation>
        <location evidence="2">Mitochondrion inner membrane</location>
        <topology evidence="2">Peripheral membrane protein</topology>
        <orientation evidence="2">Matrix side</orientation>
    </subcellularLocation>
</comment>
<comment type="similarity">
    <text evidence="2">Belongs to the class I-like SAM-binding methyltransferase superfamily. MenG/UbiE family.</text>
</comment>
<feature type="transit peptide" description="Mitochondrion" evidence="2">
    <location>
        <begin position="1"/>
        <end position="42"/>
    </location>
</feature>
<feature type="chain" id="PRO_0000283067" description="2-methoxy-6-polyprenyl-1,4-benzoquinol methylase, mitochondrial">
    <location>
        <begin position="43"/>
        <end position="330"/>
    </location>
</feature>
<feature type="binding site" evidence="2">
    <location>
        <position position="117"/>
    </location>
    <ligand>
        <name>S-adenosyl-L-methionine</name>
        <dbReference type="ChEBI" id="CHEBI:59789"/>
    </ligand>
</feature>
<feature type="binding site" evidence="2">
    <location>
        <position position="171"/>
    </location>
    <ligand>
        <name>S-adenosyl-L-methionine</name>
        <dbReference type="ChEBI" id="CHEBI:59789"/>
    </ligand>
</feature>
<feature type="binding site" evidence="2">
    <location>
        <begin position="199"/>
        <end position="200"/>
    </location>
    <ligand>
        <name>S-adenosyl-L-methionine</name>
        <dbReference type="ChEBI" id="CHEBI:59789"/>
    </ligand>
</feature>
<proteinExistence type="evidence at transcript level"/>
<reference key="1">
    <citation type="submission" date="2006-08" db="EMBL/GenBank/DDBJ databases">
        <authorList>
            <consortium name="NIH - Mammalian Gene Collection (MGC) project"/>
        </authorList>
    </citation>
    <scope>NUCLEOTIDE SEQUENCE [LARGE SCALE MRNA]</scope>
    <source>
        <strain>Hereford</strain>
        <tissue>Hippocampus</tissue>
    </source>
</reference>
<protein>
    <recommendedName>
        <fullName evidence="2">2-methoxy-6-polyprenyl-1,4-benzoquinol methylase, mitochondrial</fullName>
        <ecNumber evidence="2">2.1.1.201</ecNumber>
    </recommendedName>
    <alternativeName>
        <fullName evidence="2">Ubiquinone biosynthesis methyltransferase COQ5</fullName>
    </alternativeName>
</protein>
<evidence type="ECO:0000250" key="1">
    <source>
        <dbReference type="UniProtKB" id="Q5HYK3"/>
    </source>
</evidence>
<evidence type="ECO:0000255" key="2">
    <source>
        <dbReference type="HAMAP-Rule" id="MF_03191"/>
    </source>
</evidence>
<gene>
    <name evidence="2" type="primary">COQ5</name>
</gene>
<dbReference type="EC" id="2.1.1.201" evidence="2"/>
<dbReference type="EMBL" id="BC120308">
    <property type="protein sequence ID" value="AAI20309.1"/>
    <property type="molecule type" value="mRNA"/>
</dbReference>
<dbReference type="RefSeq" id="XP_010812368.1">
    <property type="nucleotide sequence ID" value="XM_010814066.4"/>
</dbReference>
<dbReference type="RefSeq" id="XP_010821736.1">
    <property type="nucleotide sequence ID" value="XM_010823434.2"/>
</dbReference>
<dbReference type="SMR" id="Q0P5A2"/>
<dbReference type="FunCoup" id="Q0P5A2">
    <property type="interactions" value="2862"/>
</dbReference>
<dbReference type="STRING" id="9913.ENSBTAP00000020929"/>
<dbReference type="GlyGen" id="Q0P5A2">
    <property type="glycosylation" value="1 site, 1 O-linked glycan (1 site)"/>
</dbReference>
<dbReference type="PaxDb" id="9913-ENSBTAP00000020929"/>
<dbReference type="GeneID" id="533208"/>
<dbReference type="KEGG" id="bta:533208"/>
<dbReference type="CTD" id="84274"/>
<dbReference type="VEuPathDB" id="HostDB:ENSBTAG00000015761"/>
<dbReference type="eggNOG" id="KOG1540">
    <property type="taxonomic scope" value="Eukaryota"/>
</dbReference>
<dbReference type="HOGENOM" id="CLU_037990_0_1_1"/>
<dbReference type="InParanoid" id="Q0P5A2"/>
<dbReference type="OMA" id="MNDVMSM"/>
<dbReference type="OrthoDB" id="6329284at2759"/>
<dbReference type="TreeFam" id="TF106217"/>
<dbReference type="Reactome" id="R-BTA-2142789">
    <property type="pathway name" value="Ubiquinol biosynthesis"/>
</dbReference>
<dbReference type="UniPathway" id="UPA00232"/>
<dbReference type="Proteomes" id="UP000009136">
    <property type="component" value="Chromosome 17"/>
</dbReference>
<dbReference type="Bgee" id="ENSBTAG00000015761">
    <property type="expression patterns" value="Expressed in tongue muscle and 107 other cell types or tissues"/>
</dbReference>
<dbReference type="GO" id="GO:0031314">
    <property type="term" value="C:extrinsic component of mitochondrial inner membrane"/>
    <property type="evidence" value="ECO:0007669"/>
    <property type="project" value="UniProtKB-UniRule"/>
</dbReference>
<dbReference type="GO" id="GO:0008425">
    <property type="term" value="F:2-methoxy-6-polyprenyl-1,4-benzoquinol methyltransferase activity"/>
    <property type="evidence" value="ECO:0000250"/>
    <property type="project" value="UniProtKB"/>
</dbReference>
<dbReference type="GO" id="GO:0032259">
    <property type="term" value="P:methylation"/>
    <property type="evidence" value="ECO:0007669"/>
    <property type="project" value="UniProtKB-KW"/>
</dbReference>
<dbReference type="GO" id="GO:0006744">
    <property type="term" value="P:ubiquinone biosynthetic process"/>
    <property type="evidence" value="ECO:0000250"/>
    <property type="project" value="UniProtKB"/>
</dbReference>
<dbReference type="CDD" id="cd02440">
    <property type="entry name" value="AdoMet_MTases"/>
    <property type="match status" value="1"/>
</dbReference>
<dbReference type="FunFam" id="3.40.50.150:FF:000064">
    <property type="entry name" value="2-methoxy-6-polyprenyl-1,4-benzoquinol methylase, mitochondrial"/>
    <property type="match status" value="1"/>
</dbReference>
<dbReference type="Gene3D" id="3.40.50.150">
    <property type="entry name" value="Vaccinia Virus protein VP39"/>
    <property type="match status" value="1"/>
</dbReference>
<dbReference type="HAMAP" id="MF_01813">
    <property type="entry name" value="MenG_UbiE_methyltr"/>
    <property type="match status" value="1"/>
</dbReference>
<dbReference type="InterPro" id="IPR029063">
    <property type="entry name" value="SAM-dependent_MTases_sf"/>
</dbReference>
<dbReference type="InterPro" id="IPR004033">
    <property type="entry name" value="UbiE/COQ5_MeTrFase"/>
</dbReference>
<dbReference type="InterPro" id="IPR023576">
    <property type="entry name" value="UbiE/COQ5_MeTrFase_CS"/>
</dbReference>
<dbReference type="NCBIfam" id="TIGR01934">
    <property type="entry name" value="MenG_MenH_UbiE"/>
    <property type="match status" value="1"/>
</dbReference>
<dbReference type="NCBIfam" id="NF001244">
    <property type="entry name" value="PRK00216.1-5"/>
    <property type="match status" value="1"/>
</dbReference>
<dbReference type="PANTHER" id="PTHR43591:SF24">
    <property type="entry name" value="2-METHOXY-6-POLYPRENYL-1,4-BENZOQUINOL METHYLASE, MITOCHONDRIAL"/>
    <property type="match status" value="1"/>
</dbReference>
<dbReference type="PANTHER" id="PTHR43591">
    <property type="entry name" value="METHYLTRANSFERASE"/>
    <property type="match status" value="1"/>
</dbReference>
<dbReference type="Pfam" id="PF01209">
    <property type="entry name" value="Ubie_methyltran"/>
    <property type="match status" value="1"/>
</dbReference>
<dbReference type="SUPFAM" id="SSF53335">
    <property type="entry name" value="S-adenosyl-L-methionine-dependent methyltransferases"/>
    <property type="match status" value="1"/>
</dbReference>
<dbReference type="PROSITE" id="PS51608">
    <property type="entry name" value="SAM_MT_UBIE"/>
    <property type="match status" value="1"/>
</dbReference>
<dbReference type="PROSITE" id="PS01183">
    <property type="entry name" value="UBIE_1"/>
    <property type="match status" value="1"/>
</dbReference>
<dbReference type="PROSITE" id="PS01184">
    <property type="entry name" value="UBIE_2"/>
    <property type="match status" value="1"/>
</dbReference>
<accession>Q0P5A2</accession>
<name>COQ5_BOVIN</name>
<keyword id="KW-0472">Membrane</keyword>
<keyword id="KW-0489">Methyltransferase</keyword>
<keyword id="KW-0496">Mitochondrion</keyword>
<keyword id="KW-0999">Mitochondrion inner membrane</keyword>
<keyword id="KW-1185">Reference proteome</keyword>
<keyword id="KW-0949">S-adenosyl-L-methionine</keyword>
<keyword id="KW-0808">Transferase</keyword>
<keyword id="KW-0809">Transit peptide</keyword>
<keyword id="KW-0831">Ubiquinone biosynthesis</keyword>